<proteinExistence type="inferred from homology"/>
<reference key="1">
    <citation type="journal article" date="2008" name="Genome Res.">
        <title>Comparative genome analysis of Salmonella enteritidis PT4 and Salmonella gallinarum 287/91 provides insights into evolutionary and host adaptation pathways.</title>
        <authorList>
            <person name="Thomson N.R."/>
            <person name="Clayton D.J."/>
            <person name="Windhorst D."/>
            <person name="Vernikos G."/>
            <person name="Davidson S."/>
            <person name="Churcher C."/>
            <person name="Quail M.A."/>
            <person name="Stevens M."/>
            <person name="Jones M.A."/>
            <person name="Watson M."/>
            <person name="Barron A."/>
            <person name="Layton A."/>
            <person name="Pickard D."/>
            <person name="Kingsley R.A."/>
            <person name="Bignell A."/>
            <person name="Clark L."/>
            <person name="Harris B."/>
            <person name="Ormond D."/>
            <person name="Abdellah Z."/>
            <person name="Brooks K."/>
            <person name="Cherevach I."/>
            <person name="Chillingworth T."/>
            <person name="Woodward J."/>
            <person name="Norberczak H."/>
            <person name="Lord A."/>
            <person name="Arrowsmith C."/>
            <person name="Jagels K."/>
            <person name="Moule S."/>
            <person name="Mungall K."/>
            <person name="Saunders M."/>
            <person name="Whitehead S."/>
            <person name="Chabalgoity J.A."/>
            <person name="Maskell D."/>
            <person name="Humphreys T."/>
            <person name="Roberts M."/>
            <person name="Barrow P.A."/>
            <person name="Dougan G."/>
            <person name="Parkhill J."/>
        </authorList>
    </citation>
    <scope>NUCLEOTIDE SEQUENCE [LARGE SCALE GENOMIC DNA]</scope>
    <source>
        <strain>287/91 / NCTC 13346</strain>
    </source>
</reference>
<accession>B5RAG2</accession>
<protein>
    <recommendedName>
        <fullName evidence="1">UPF0482 protein YnfB</fullName>
    </recommendedName>
</protein>
<feature type="signal peptide" evidence="1">
    <location>
        <begin position="1"/>
        <end position="28"/>
    </location>
</feature>
<feature type="chain" id="PRO_5000398246" description="UPF0482 protein YnfB">
    <location>
        <begin position="29"/>
        <end position="113"/>
    </location>
</feature>
<comment type="similarity">
    <text evidence="1">Belongs to the UPF0482 family.</text>
</comment>
<name>YNFB_SALG2</name>
<organism>
    <name type="scientific">Salmonella gallinarum (strain 287/91 / NCTC 13346)</name>
    <dbReference type="NCBI Taxonomy" id="550538"/>
    <lineage>
        <taxon>Bacteria</taxon>
        <taxon>Pseudomonadati</taxon>
        <taxon>Pseudomonadota</taxon>
        <taxon>Gammaproteobacteria</taxon>
        <taxon>Enterobacterales</taxon>
        <taxon>Enterobacteriaceae</taxon>
        <taxon>Salmonella</taxon>
    </lineage>
</organism>
<dbReference type="EMBL" id="AM933173">
    <property type="protein sequence ID" value="CAR37477.1"/>
    <property type="molecule type" value="Genomic_DNA"/>
</dbReference>
<dbReference type="RefSeq" id="WP_001066440.1">
    <property type="nucleotide sequence ID" value="NC_011274.1"/>
</dbReference>
<dbReference type="KEGG" id="seg:SG1617"/>
<dbReference type="HOGENOM" id="CLU_167574_0_0_6"/>
<dbReference type="Proteomes" id="UP000008321">
    <property type="component" value="Chromosome"/>
</dbReference>
<dbReference type="HAMAP" id="MF_01581">
    <property type="entry name" value="UPF0482"/>
    <property type="match status" value="1"/>
</dbReference>
<dbReference type="InterPro" id="IPR009700">
    <property type="entry name" value="DUF1283"/>
</dbReference>
<dbReference type="NCBIfam" id="NF010180">
    <property type="entry name" value="PRK13659.1"/>
    <property type="match status" value="1"/>
</dbReference>
<dbReference type="Pfam" id="PF06932">
    <property type="entry name" value="DUF1283"/>
    <property type="match status" value="1"/>
</dbReference>
<gene>
    <name evidence="1" type="primary">ynfB</name>
    <name type="ordered locus">SG1617</name>
</gene>
<keyword id="KW-0732">Signal</keyword>
<evidence type="ECO:0000255" key="1">
    <source>
        <dbReference type="HAMAP-Rule" id="MF_01581"/>
    </source>
</evidence>
<sequence length="113" mass="12846">MNNTLSKRLCLTAMLTLAAVVYTTSAFAETSKLVIESGDSAQSRQEAAMEKEQWNDTRSLRQKVNTRAEKEWDKADAAFDNRDKCEQSANINAYWEPNTLRCLDRRTGRVITP</sequence>